<accession>Q9K1N8</accession>
<comment type="function">
    <text evidence="1">Has an important function as a repair enzyme for proteins that have been inactivated by oxidation. Catalyzes the reversible oxidation-reduction of methionine sulfoxide in proteins to methionine (By similarity).</text>
</comment>
<comment type="catalytic activity">
    <reaction>
        <text>L-methionyl-[protein] + [thioredoxin]-disulfide + H2O = L-methionyl-(S)-S-oxide-[protein] + [thioredoxin]-dithiol</text>
        <dbReference type="Rhea" id="RHEA:14217"/>
        <dbReference type="Rhea" id="RHEA-COMP:10698"/>
        <dbReference type="Rhea" id="RHEA-COMP:10700"/>
        <dbReference type="Rhea" id="RHEA-COMP:12313"/>
        <dbReference type="Rhea" id="RHEA-COMP:12315"/>
        <dbReference type="ChEBI" id="CHEBI:15377"/>
        <dbReference type="ChEBI" id="CHEBI:16044"/>
        <dbReference type="ChEBI" id="CHEBI:29950"/>
        <dbReference type="ChEBI" id="CHEBI:44120"/>
        <dbReference type="ChEBI" id="CHEBI:50058"/>
        <dbReference type="EC" id="1.8.4.11"/>
    </reaction>
</comment>
<comment type="catalytic activity">
    <reaction>
        <text>[thioredoxin]-disulfide + L-methionine + H2O = L-methionine (S)-S-oxide + [thioredoxin]-dithiol</text>
        <dbReference type="Rhea" id="RHEA:19993"/>
        <dbReference type="Rhea" id="RHEA-COMP:10698"/>
        <dbReference type="Rhea" id="RHEA-COMP:10700"/>
        <dbReference type="ChEBI" id="CHEBI:15377"/>
        <dbReference type="ChEBI" id="CHEBI:29950"/>
        <dbReference type="ChEBI" id="CHEBI:50058"/>
        <dbReference type="ChEBI" id="CHEBI:57844"/>
        <dbReference type="ChEBI" id="CHEBI:58772"/>
        <dbReference type="EC" id="1.8.4.11"/>
    </reaction>
</comment>
<comment type="catalytic activity">
    <reaction>
        <text>L-methionyl-[protein] + [thioredoxin]-disulfide + H2O = L-methionyl-(R)-S-oxide-[protein] + [thioredoxin]-dithiol</text>
        <dbReference type="Rhea" id="RHEA:24164"/>
        <dbReference type="Rhea" id="RHEA-COMP:10698"/>
        <dbReference type="Rhea" id="RHEA-COMP:10700"/>
        <dbReference type="Rhea" id="RHEA-COMP:12313"/>
        <dbReference type="Rhea" id="RHEA-COMP:12314"/>
        <dbReference type="ChEBI" id="CHEBI:15377"/>
        <dbReference type="ChEBI" id="CHEBI:16044"/>
        <dbReference type="ChEBI" id="CHEBI:29950"/>
        <dbReference type="ChEBI" id="CHEBI:45764"/>
        <dbReference type="ChEBI" id="CHEBI:50058"/>
        <dbReference type="EC" id="1.8.4.12"/>
    </reaction>
</comment>
<comment type="domain">
    <text>Possesses 2 methionine sulfoxide reductase domains (A/MsrA and B/MsrB) and 1 N-terminal thioredoxin domain. The domain B exhibits a thioredoxin dependent methionine sulfoxide reductase activity; the Cys-495 is probably involved in the reduction of MetSO and in formation of the sulfenic acid derivative. The regeneration of Cys-495 is probably done via formation of a disulfide bond with Cys-440 followed by its reduction by thioredoxin.</text>
</comment>
<comment type="similarity">
    <text evidence="3">In the N-terminal section; belongs to the thioredoxin family.</text>
</comment>
<comment type="similarity">
    <text evidence="3">In the central section; belongs to the MsrA Met sulfoxide reductase family.</text>
</comment>
<comment type="similarity">
    <text evidence="3">In the C-terminal section; belongs to the MsrB Met sulfoxide reductase family.</text>
</comment>
<protein>
    <recommendedName>
        <fullName>Peptide methionine sulfoxide reductase MsrA/MsrB</fullName>
    </recommendedName>
    <domain>
        <recommendedName>
            <fullName>Thioredoxin</fullName>
        </recommendedName>
    </domain>
    <domain>
        <recommendedName>
            <fullName>Peptide methionine sulfoxide reductase MsrA</fullName>
            <shortName>Protein-methionine-S-oxide reductase</shortName>
            <ecNumber>1.8.4.11</ecNumber>
        </recommendedName>
        <alternativeName>
            <fullName>Peptide-methionine (S)-S-oxide reductase</fullName>
            <shortName>Peptide Met(O) reductase</shortName>
        </alternativeName>
    </domain>
    <domain>
        <recommendedName>
            <fullName>Peptide methionine sulfoxide reductase MsrB</fullName>
            <ecNumber>1.8.4.12</ecNumber>
        </recommendedName>
        <alternativeName>
            <fullName>Peptide-methionine (R)-S-oxide reductase</fullName>
        </alternativeName>
    </domain>
</protein>
<sequence>MKHRTFFSLCAKFGCLLALGACSPKIVDAGAATVPHTLSTLKTADNRPASVYLKKDKPTLIKFWASWCPLCLSELGQTEKWAQDAKFSSANLITVASPGFLHEKKDGDFQKWYAGLNYPKLPVVTDNGGTIAQSLNISVYPSWALIGKDSDVQRIVKGSINEAQALALIRDPNADLGSLKHSFYKPDTQKKDSKIMNTRTIYLAGGCFWGLEAYFQRIDGVVDAVSGYANGNTKNPSYEDVSYRHTGHAETVKVTYDADKLSLDDILQYFFRVVDPTSLNKQGNDTGTQYRSGVYYTDPAEKAVIAAALKREQQKYQLPLVVENEPLKNFYDAEEYHQDYLIKNPNGYCHIDIRKADEPLPGKTKTAPQGKGFDAATYKKPSDAELKRTLTEEQYQVTQNSATEYAFSHEYDHLFKPGIYVDVVSGEPLFSSADKYDSGCGWPSFTRPIDAKSVTEHDDFSYNMRRTEVRSHAADSHLGHVFPDGPRDKGGLRYCINGASLKFIPLEQMDAAGYGALKGKVK</sequence>
<gene>
    <name type="primary">msrAB</name>
    <name type="synonym">pilB</name>
    <name type="ordered locus">NMB0044</name>
</gene>
<proteinExistence type="inferred from homology"/>
<feature type="chain" id="PRO_0000138510" description="Peptide methionine sulfoxide reductase MsrA/MsrB">
    <location>
        <begin position="1"/>
        <end position="522"/>
    </location>
</feature>
<feature type="domain" description="Thioredoxin">
    <location>
        <begin position="17"/>
        <end position="174"/>
    </location>
</feature>
<feature type="domain" description="MsrB" evidence="2">
    <location>
        <begin position="383"/>
        <end position="506"/>
    </location>
</feature>
<feature type="region of interest" description="Peptide methionine sulfoxide reductase A">
    <location>
        <begin position="199"/>
        <end position="354"/>
    </location>
</feature>
<feature type="active site" evidence="1">
    <location>
        <position position="207"/>
    </location>
</feature>
<feature type="active site" description="Nucleophile" evidence="2">
    <location>
        <position position="495"/>
    </location>
</feature>
<feature type="disulfide bond" description="Redox-active" evidence="1">
    <location>
        <begin position="68"/>
        <end position="71"/>
    </location>
</feature>
<feature type="disulfide bond" evidence="1">
    <location>
        <begin position="440"/>
        <end position="495"/>
    </location>
</feature>
<organism>
    <name type="scientific">Neisseria meningitidis serogroup B (strain ATCC BAA-335 / MC58)</name>
    <dbReference type="NCBI Taxonomy" id="122586"/>
    <lineage>
        <taxon>Bacteria</taxon>
        <taxon>Pseudomonadati</taxon>
        <taxon>Pseudomonadota</taxon>
        <taxon>Betaproteobacteria</taxon>
        <taxon>Neisseriales</taxon>
        <taxon>Neisseriaceae</taxon>
        <taxon>Neisseria</taxon>
    </lineage>
</organism>
<name>MSRAB_NEIMB</name>
<dbReference type="EC" id="1.8.4.11"/>
<dbReference type="EC" id="1.8.4.12"/>
<dbReference type="EMBL" id="AE002098">
    <property type="protein sequence ID" value="AAF40515.1"/>
    <property type="molecule type" value="Genomic_DNA"/>
</dbReference>
<dbReference type="PIR" id="G81243">
    <property type="entry name" value="G81243"/>
</dbReference>
<dbReference type="RefSeq" id="NP_273110.1">
    <property type="nucleotide sequence ID" value="NC_003112.2"/>
</dbReference>
<dbReference type="RefSeq" id="WP_010980745.1">
    <property type="nucleotide sequence ID" value="NC_003112.2"/>
</dbReference>
<dbReference type="BMRB" id="Q9K1N8"/>
<dbReference type="SMR" id="Q9K1N8"/>
<dbReference type="STRING" id="122586.NMB0044"/>
<dbReference type="PaxDb" id="122586-NMB0044"/>
<dbReference type="KEGG" id="nme:NMB0044"/>
<dbReference type="PATRIC" id="fig|122586.8.peg.59"/>
<dbReference type="HOGENOM" id="CLU_031040_11_0_4"/>
<dbReference type="InParanoid" id="Q9K1N8"/>
<dbReference type="OrthoDB" id="4174719at2"/>
<dbReference type="Proteomes" id="UP000000425">
    <property type="component" value="Chromosome"/>
</dbReference>
<dbReference type="GO" id="GO:0005737">
    <property type="term" value="C:cytoplasm"/>
    <property type="evidence" value="ECO:0000318"/>
    <property type="project" value="GO_Central"/>
</dbReference>
<dbReference type="GO" id="GO:0036456">
    <property type="term" value="F:L-methionine-(S)-S-oxide reductase activity"/>
    <property type="evidence" value="ECO:0000318"/>
    <property type="project" value="GO_Central"/>
</dbReference>
<dbReference type="GO" id="GO:0033743">
    <property type="term" value="F:peptide-methionine (R)-S-oxide reductase activity"/>
    <property type="evidence" value="ECO:0007669"/>
    <property type="project" value="UniProtKB-UniRule"/>
</dbReference>
<dbReference type="GO" id="GO:0008113">
    <property type="term" value="F:peptide-methionine (S)-S-oxide reductase activity"/>
    <property type="evidence" value="ECO:0000318"/>
    <property type="project" value="GO_Central"/>
</dbReference>
<dbReference type="GO" id="GO:0034599">
    <property type="term" value="P:cellular response to oxidative stress"/>
    <property type="evidence" value="ECO:0000318"/>
    <property type="project" value="GO_Central"/>
</dbReference>
<dbReference type="GO" id="GO:0036211">
    <property type="term" value="P:protein modification process"/>
    <property type="evidence" value="ECO:0007669"/>
    <property type="project" value="UniProtKB-UniRule"/>
</dbReference>
<dbReference type="CDD" id="cd02966">
    <property type="entry name" value="TlpA_like_family"/>
    <property type="match status" value="1"/>
</dbReference>
<dbReference type="FunFam" id="3.40.30.10:FF:000321">
    <property type="entry name" value="Multifunctional fusion protein"/>
    <property type="match status" value="1"/>
</dbReference>
<dbReference type="FunFam" id="3.30.1060.10:FF:000007">
    <property type="entry name" value="Peptide methionine sulfoxide reductase msrA/msrB"/>
    <property type="match status" value="1"/>
</dbReference>
<dbReference type="FunFam" id="2.170.150.20:FF:000003">
    <property type="entry name" value="Peptide methionine sulfoxide reductase MsrB"/>
    <property type="match status" value="1"/>
</dbReference>
<dbReference type="Gene3D" id="3.40.30.10">
    <property type="entry name" value="Glutaredoxin"/>
    <property type="match status" value="1"/>
</dbReference>
<dbReference type="Gene3D" id="2.170.150.20">
    <property type="entry name" value="Peptide methionine sulfoxide reductase"/>
    <property type="match status" value="1"/>
</dbReference>
<dbReference type="Gene3D" id="3.30.1060.10">
    <property type="entry name" value="Peptide methionine sulphoxide reductase MsrA"/>
    <property type="match status" value="1"/>
</dbReference>
<dbReference type="HAMAP" id="MF_01401">
    <property type="entry name" value="MsrA"/>
    <property type="match status" value="1"/>
</dbReference>
<dbReference type="HAMAP" id="MF_01400">
    <property type="entry name" value="MsrB"/>
    <property type="match status" value="1"/>
</dbReference>
<dbReference type="InterPro" id="IPR002569">
    <property type="entry name" value="Met_Sox_Rdtase_MsrA_dom"/>
</dbReference>
<dbReference type="InterPro" id="IPR036509">
    <property type="entry name" value="Met_Sox_Rdtase_MsrA_sf"/>
</dbReference>
<dbReference type="InterPro" id="IPR002579">
    <property type="entry name" value="Met_Sox_Rdtase_MsrB_dom"/>
</dbReference>
<dbReference type="InterPro" id="IPR050162">
    <property type="entry name" value="MsrA_MetSO_reductase"/>
</dbReference>
<dbReference type="InterPro" id="IPR011057">
    <property type="entry name" value="Mss4-like_sf"/>
</dbReference>
<dbReference type="InterPro" id="IPR013740">
    <property type="entry name" value="Redoxin"/>
</dbReference>
<dbReference type="InterPro" id="IPR036249">
    <property type="entry name" value="Thioredoxin-like_sf"/>
</dbReference>
<dbReference type="InterPro" id="IPR013766">
    <property type="entry name" value="Thioredoxin_domain"/>
</dbReference>
<dbReference type="NCBIfam" id="TIGR00401">
    <property type="entry name" value="msrA"/>
    <property type="match status" value="1"/>
</dbReference>
<dbReference type="NCBIfam" id="TIGR00357">
    <property type="entry name" value="peptide-methionine (R)-S-oxide reductase MsrB"/>
    <property type="match status" value="1"/>
</dbReference>
<dbReference type="NCBIfam" id="NF010625">
    <property type="entry name" value="PRK14018.1"/>
    <property type="match status" value="1"/>
</dbReference>
<dbReference type="PANTHER" id="PTHR42799">
    <property type="entry name" value="MITOCHONDRIAL PEPTIDE METHIONINE SULFOXIDE REDUCTASE"/>
    <property type="match status" value="1"/>
</dbReference>
<dbReference type="PANTHER" id="PTHR42799:SF2">
    <property type="entry name" value="MITOCHONDRIAL PEPTIDE METHIONINE SULFOXIDE REDUCTASE"/>
    <property type="match status" value="1"/>
</dbReference>
<dbReference type="Pfam" id="PF01625">
    <property type="entry name" value="PMSR"/>
    <property type="match status" value="1"/>
</dbReference>
<dbReference type="Pfam" id="PF08534">
    <property type="entry name" value="Redoxin"/>
    <property type="match status" value="1"/>
</dbReference>
<dbReference type="Pfam" id="PF01641">
    <property type="entry name" value="SelR"/>
    <property type="match status" value="1"/>
</dbReference>
<dbReference type="SUPFAM" id="SSF51316">
    <property type="entry name" value="Mss4-like"/>
    <property type="match status" value="1"/>
</dbReference>
<dbReference type="SUPFAM" id="SSF55068">
    <property type="entry name" value="Peptide methionine sulfoxide reductase"/>
    <property type="match status" value="1"/>
</dbReference>
<dbReference type="SUPFAM" id="SSF52833">
    <property type="entry name" value="Thioredoxin-like"/>
    <property type="match status" value="1"/>
</dbReference>
<dbReference type="PROSITE" id="PS51790">
    <property type="entry name" value="MSRB"/>
    <property type="match status" value="1"/>
</dbReference>
<dbReference type="PROSITE" id="PS51352">
    <property type="entry name" value="THIOREDOXIN_2"/>
    <property type="match status" value="1"/>
</dbReference>
<evidence type="ECO:0000250" key="1"/>
<evidence type="ECO:0000255" key="2">
    <source>
        <dbReference type="PROSITE-ProRule" id="PRU01126"/>
    </source>
</evidence>
<evidence type="ECO:0000305" key="3"/>
<reference key="1">
    <citation type="journal article" date="2000" name="Science">
        <title>Complete genome sequence of Neisseria meningitidis serogroup B strain MC58.</title>
        <authorList>
            <person name="Tettelin H."/>
            <person name="Saunders N.J."/>
            <person name="Heidelberg J.F."/>
            <person name="Jeffries A.C."/>
            <person name="Nelson K.E."/>
            <person name="Eisen J.A."/>
            <person name="Ketchum K.A."/>
            <person name="Hood D.W."/>
            <person name="Peden J.F."/>
            <person name="Dodson R.J."/>
            <person name="Nelson W.C."/>
            <person name="Gwinn M.L."/>
            <person name="DeBoy R.T."/>
            <person name="Peterson J.D."/>
            <person name="Hickey E.K."/>
            <person name="Haft D.H."/>
            <person name="Salzberg S.L."/>
            <person name="White O."/>
            <person name="Fleischmann R.D."/>
            <person name="Dougherty B.A."/>
            <person name="Mason T.M."/>
            <person name="Ciecko A."/>
            <person name="Parksey D.S."/>
            <person name="Blair E."/>
            <person name="Cittone H."/>
            <person name="Clark E.B."/>
            <person name="Cotton M.D."/>
            <person name="Utterback T.R."/>
            <person name="Khouri H.M."/>
            <person name="Qin H."/>
            <person name="Vamathevan J.J."/>
            <person name="Gill J."/>
            <person name="Scarlato V."/>
            <person name="Masignani V."/>
            <person name="Pizza M."/>
            <person name="Grandi G."/>
            <person name="Sun L."/>
            <person name="Smith H.O."/>
            <person name="Fraser C.M."/>
            <person name="Moxon E.R."/>
            <person name="Rappuoli R."/>
            <person name="Venter J.C."/>
        </authorList>
    </citation>
    <scope>NUCLEOTIDE SEQUENCE [LARGE SCALE GENOMIC DNA]</scope>
    <source>
        <strain>ATCC BAA-335 / MC58</strain>
    </source>
</reference>
<keyword id="KW-1015">Disulfide bond</keyword>
<keyword id="KW-0249">Electron transport</keyword>
<keyword id="KW-0511">Multifunctional enzyme</keyword>
<keyword id="KW-0560">Oxidoreductase</keyword>
<keyword id="KW-0676">Redox-active center</keyword>
<keyword id="KW-1185">Reference proteome</keyword>
<keyword id="KW-0813">Transport</keyword>